<keyword id="KW-0963">Cytoplasm</keyword>
<keyword id="KW-0396">Initiation factor</keyword>
<keyword id="KW-0648">Protein biosynthesis</keyword>
<keyword id="KW-0694">RNA-binding</keyword>
<keyword id="KW-0699">rRNA-binding</keyword>
<proteinExistence type="inferred from homology"/>
<dbReference type="EMBL" id="CP000388">
    <property type="protein sequence ID" value="ABG40889.1"/>
    <property type="molecule type" value="Genomic_DNA"/>
</dbReference>
<dbReference type="RefSeq" id="WP_006990869.1">
    <property type="nucleotide sequence ID" value="NC_008228.1"/>
</dbReference>
<dbReference type="SMR" id="Q15T99"/>
<dbReference type="STRING" id="342610.Patl_2373"/>
<dbReference type="KEGG" id="pat:Patl_2373"/>
<dbReference type="eggNOG" id="COG0361">
    <property type="taxonomic scope" value="Bacteria"/>
</dbReference>
<dbReference type="HOGENOM" id="CLU_151267_1_0_6"/>
<dbReference type="OrthoDB" id="9803250at2"/>
<dbReference type="Proteomes" id="UP000001981">
    <property type="component" value="Chromosome"/>
</dbReference>
<dbReference type="GO" id="GO:0005829">
    <property type="term" value="C:cytosol"/>
    <property type="evidence" value="ECO:0007669"/>
    <property type="project" value="TreeGrafter"/>
</dbReference>
<dbReference type="GO" id="GO:0043022">
    <property type="term" value="F:ribosome binding"/>
    <property type="evidence" value="ECO:0007669"/>
    <property type="project" value="UniProtKB-UniRule"/>
</dbReference>
<dbReference type="GO" id="GO:0019843">
    <property type="term" value="F:rRNA binding"/>
    <property type="evidence" value="ECO:0007669"/>
    <property type="project" value="UniProtKB-UniRule"/>
</dbReference>
<dbReference type="GO" id="GO:0003743">
    <property type="term" value="F:translation initiation factor activity"/>
    <property type="evidence" value="ECO:0007669"/>
    <property type="project" value="UniProtKB-UniRule"/>
</dbReference>
<dbReference type="CDD" id="cd04451">
    <property type="entry name" value="S1_IF1"/>
    <property type="match status" value="1"/>
</dbReference>
<dbReference type="FunFam" id="2.40.50.140:FF:000002">
    <property type="entry name" value="Translation initiation factor IF-1"/>
    <property type="match status" value="1"/>
</dbReference>
<dbReference type="Gene3D" id="2.40.50.140">
    <property type="entry name" value="Nucleic acid-binding proteins"/>
    <property type="match status" value="1"/>
</dbReference>
<dbReference type="HAMAP" id="MF_00075">
    <property type="entry name" value="IF_1"/>
    <property type="match status" value="1"/>
</dbReference>
<dbReference type="InterPro" id="IPR012340">
    <property type="entry name" value="NA-bd_OB-fold"/>
</dbReference>
<dbReference type="InterPro" id="IPR006196">
    <property type="entry name" value="RNA-binding_domain_S1_IF1"/>
</dbReference>
<dbReference type="InterPro" id="IPR003029">
    <property type="entry name" value="S1_domain"/>
</dbReference>
<dbReference type="InterPro" id="IPR004368">
    <property type="entry name" value="TIF_IF1"/>
</dbReference>
<dbReference type="NCBIfam" id="TIGR00008">
    <property type="entry name" value="infA"/>
    <property type="match status" value="1"/>
</dbReference>
<dbReference type="PANTHER" id="PTHR33370">
    <property type="entry name" value="TRANSLATION INITIATION FACTOR IF-1, CHLOROPLASTIC"/>
    <property type="match status" value="1"/>
</dbReference>
<dbReference type="PANTHER" id="PTHR33370:SF1">
    <property type="entry name" value="TRANSLATION INITIATION FACTOR IF-1, CHLOROPLASTIC"/>
    <property type="match status" value="1"/>
</dbReference>
<dbReference type="Pfam" id="PF01176">
    <property type="entry name" value="eIF-1a"/>
    <property type="match status" value="1"/>
</dbReference>
<dbReference type="SMART" id="SM00316">
    <property type="entry name" value="S1"/>
    <property type="match status" value="1"/>
</dbReference>
<dbReference type="SUPFAM" id="SSF50249">
    <property type="entry name" value="Nucleic acid-binding proteins"/>
    <property type="match status" value="1"/>
</dbReference>
<dbReference type="PROSITE" id="PS50832">
    <property type="entry name" value="S1_IF1_TYPE"/>
    <property type="match status" value="1"/>
</dbReference>
<gene>
    <name evidence="1" type="primary">infA</name>
    <name type="ordered locus">Patl_2373</name>
</gene>
<evidence type="ECO:0000255" key="1">
    <source>
        <dbReference type="HAMAP-Rule" id="MF_00075"/>
    </source>
</evidence>
<accession>Q15T99</accession>
<reference key="1">
    <citation type="submission" date="2006-06" db="EMBL/GenBank/DDBJ databases">
        <title>Complete sequence of Pseudoalteromonas atlantica T6c.</title>
        <authorList>
            <consortium name="US DOE Joint Genome Institute"/>
            <person name="Copeland A."/>
            <person name="Lucas S."/>
            <person name="Lapidus A."/>
            <person name="Barry K."/>
            <person name="Detter J.C."/>
            <person name="Glavina del Rio T."/>
            <person name="Hammon N."/>
            <person name="Israni S."/>
            <person name="Dalin E."/>
            <person name="Tice H."/>
            <person name="Pitluck S."/>
            <person name="Saunders E."/>
            <person name="Brettin T."/>
            <person name="Bruce D."/>
            <person name="Han C."/>
            <person name="Tapia R."/>
            <person name="Gilna P."/>
            <person name="Schmutz J."/>
            <person name="Larimer F."/>
            <person name="Land M."/>
            <person name="Hauser L."/>
            <person name="Kyrpides N."/>
            <person name="Kim E."/>
            <person name="Karls A.C."/>
            <person name="Bartlett D."/>
            <person name="Higgins B.P."/>
            <person name="Richardson P."/>
        </authorList>
    </citation>
    <scope>NUCLEOTIDE SEQUENCE [LARGE SCALE GENOMIC DNA]</scope>
    <source>
        <strain>T6c / ATCC BAA-1087</strain>
    </source>
</reference>
<comment type="function">
    <text evidence="1">One of the essential components for the initiation of protein synthesis. Stabilizes the binding of IF-2 and IF-3 on the 30S subunit to which N-formylmethionyl-tRNA(fMet) subsequently binds. Helps modulate mRNA selection, yielding the 30S pre-initiation complex (PIC). Upon addition of the 50S ribosomal subunit IF-1, IF-2 and IF-3 are released leaving the mature 70S translation initiation complex.</text>
</comment>
<comment type="subunit">
    <text evidence="1">Component of the 30S ribosomal translation pre-initiation complex which assembles on the 30S ribosome in the order IF-2 and IF-3, IF-1 and N-formylmethionyl-tRNA(fMet); mRNA recruitment can occur at any time during PIC assembly.</text>
</comment>
<comment type="subcellular location">
    <subcellularLocation>
        <location evidence="1">Cytoplasm</location>
    </subcellularLocation>
</comment>
<comment type="similarity">
    <text evidence="1">Belongs to the IF-1 family.</text>
</comment>
<sequence length="72" mass="8262">MAKEDCIEMEGTVLDTLPNTMFRVELENGHVVTAHISGKMRKNYIRILTGDKVTCEMTPYDLSKGRIIYRAR</sequence>
<protein>
    <recommendedName>
        <fullName evidence="1">Translation initiation factor IF-1</fullName>
    </recommendedName>
</protein>
<feature type="chain" id="PRO_0000263838" description="Translation initiation factor IF-1">
    <location>
        <begin position="1"/>
        <end position="72"/>
    </location>
</feature>
<feature type="domain" description="S1-like" evidence="1">
    <location>
        <begin position="1"/>
        <end position="72"/>
    </location>
</feature>
<name>IF1_PSEA6</name>
<organism>
    <name type="scientific">Pseudoalteromonas atlantica (strain T6c / ATCC BAA-1087)</name>
    <dbReference type="NCBI Taxonomy" id="3042615"/>
    <lineage>
        <taxon>Bacteria</taxon>
        <taxon>Pseudomonadati</taxon>
        <taxon>Pseudomonadota</taxon>
        <taxon>Gammaproteobacteria</taxon>
        <taxon>Alteromonadales</taxon>
        <taxon>Alteromonadaceae</taxon>
        <taxon>Paraglaciecola</taxon>
    </lineage>
</organism>